<protein>
    <recommendedName>
        <fullName>Nucleoprotein</fullName>
    </recommendedName>
    <alternativeName>
        <fullName>Nucleocapsid protein</fullName>
        <shortName>Protein N</shortName>
    </alternativeName>
</protein>
<accession>A0MD36</accession>
<name>NCAP_PRRSS</name>
<comment type="subcellular location">
    <subcellularLocation>
        <location evidence="2">Virion</location>
    </subcellularLocation>
</comment>
<comment type="similarity">
    <text evidence="2">Belongs to the arteriviridae nucleocapsid family.</text>
</comment>
<feature type="chain" id="PRO_0000410885" description="Nucleoprotein">
    <location>
        <begin position="1"/>
        <end position="128"/>
    </location>
</feature>
<feature type="region of interest" description="Disordered" evidence="1">
    <location>
        <begin position="1"/>
        <end position="60"/>
    </location>
</feature>
<sequence length="128" mass="13824">MAGKNQSQKKKKSTAPMGNGQPVNQLCQLLGAMIKSQRQQPRGGQAKKKKPEKPHFPLAAEDDIRHHLTQTERSLCLQSIQTAFNQGAGTASLSSSGKVSFQVEFMLPVAHTVRLIRVTSTSASQGAN</sequence>
<reference key="1">
    <citation type="journal article" date="2006" name="Adv. Exp. Med. Biol.">
        <title>Construction of a full-length cDNA infectious clone of a European-like Type 1 PRRSV isolated in the U.S.</title>
        <authorList>
            <person name="Fang Y."/>
            <person name="Faaberg K.S."/>
            <person name="Rowland R.R."/>
            <person name="Christopher-Hennings J."/>
            <person name="Pattnaik A.K."/>
            <person name="Osorio F."/>
            <person name="Nelson E.A."/>
        </authorList>
    </citation>
    <scope>NUCLEOTIDE SEQUENCE [GENOMIC RNA]</scope>
    <source>
        <strain>Infectious clone SD 01-08</strain>
    </source>
</reference>
<proteinExistence type="inferred from homology"/>
<dbReference type="EMBL" id="DQ489311">
    <property type="protein sequence ID" value="ABF66348.1"/>
    <property type="molecule type" value="Genomic_RNA"/>
</dbReference>
<dbReference type="SMR" id="A0MD36"/>
<dbReference type="Proteomes" id="UP000000937">
    <property type="component" value="Genome"/>
</dbReference>
<dbReference type="GO" id="GO:1990904">
    <property type="term" value="C:ribonucleoprotein complex"/>
    <property type="evidence" value="ECO:0007669"/>
    <property type="project" value="UniProtKB-KW"/>
</dbReference>
<dbReference type="GO" id="GO:0019013">
    <property type="term" value="C:viral nucleocapsid"/>
    <property type="evidence" value="ECO:0007669"/>
    <property type="project" value="UniProtKB-KW"/>
</dbReference>
<dbReference type="GO" id="GO:0003723">
    <property type="term" value="F:RNA binding"/>
    <property type="evidence" value="ECO:0007669"/>
    <property type="project" value="UniProtKB-KW"/>
</dbReference>
<dbReference type="Gene3D" id="6.10.140.90">
    <property type="match status" value="1"/>
</dbReference>
<dbReference type="InterPro" id="IPR002484">
    <property type="entry name" value="Arte_nucleocap"/>
</dbReference>
<dbReference type="InterPro" id="IPR037179">
    <property type="entry name" value="Nucleocapsid_C"/>
</dbReference>
<dbReference type="Pfam" id="PF01481">
    <property type="entry name" value="Arteri_nucleo"/>
    <property type="match status" value="1"/>
</dbReference>
<dbReference type="SUPFAM" id="SSF103068">
    <property type="entry name" value="Nucleocapsid protein dimerization domain"/>
    <property type="match status" value="1"/>
</dbReference>
<organism>
    <name type="scientific">Porcine reproductive and respiratory syndrome virus (isolate Pig/United States/SD 01-08/2001)</name>
    <name type="common">PRRSV</name>
    <dbReference type="NCBI Taxonomy" id="857306"/>
    <lineage>
        <taxon>Viruses</taxon>
        <taxon>Riboviria</taxon>
        <taxon>Orthornavirae</taxon>
        <taxon>Pisuviricota</taxon>
        <taxon>Pisoniviricetes</taxon>
        <taxon>Nidovirales</taxon>
        <taxon>Arnidovirineae</taxon>
        <taxon>Arteriviridae</taxon>
        <taxon>Variarterivirinae</taxon>
        <taxon>Betaarterivirus</taxon>
        <taxon>Ampobartevirus</taxon>
        <taxon>Betaarterivirus americense</taxon>
    </lineage>
</organism>
<organismHost>
    <name type="scientific">Sus scrofa</name>
    <name type="common">Pig</name>
    <dbReference type="NCBI Taxonomy" id="9823"/>
</organismHost>
<gene>
    <name type="primary">N</name>
    <name type="synonym">VP1</name>
    <name type="ORF">7</name>
</gene>
<evidence type="ECO:0000256" key="1">
    <source>
        <dbReference type="SAM" id="MobiDB-lite"/>
    </source>
</evidence>
<evidence type="ECO:0000305" key="2"/>
<keyword id="KW-0687">Ribonucleoprotein</keyword>
<keyword id="KW-0694">RNA-binding</keyword>
<keyword id="KW-0543">Viral nucleoprotein</keyword>
<keyword id="KW-0946">Virion</keyword>